<sequence>MLSIDLNCDCGESYGAFQIGDDEGILPFVSSANIACGGHAGDPIVMRHTVRRCRELGVAVGAHPSYPDLHGFGRRVLPMSPAEIEAWVLAQIGALAAIARAEGVELRHVKPHGALYNVAARDHVVATAVARAVAAFSHELALVGLADSALIDAGREMGLPVLAEAFADRAYEADGRLRDRRYPDALIIDPTACLKQTLSIVRDGVVIAIDGTPVPLQADTICVHGDTPGAAARAAALRHGLEAAGITVRTPR</sequence>
<proteinExistence type="inferred from homology"/>
<name>PXPA_CHLAD</name>
<feature type="chain" id="PRO_1000200453" description="5-oxoprolinase subunit A">
    <location>
        <begin position="1"/>
        <end position="252"/>
    </location>
</feature>
<evidence type="ECO:0000255" key="1">
    <source>
        <dbReference type="HAMAP-Rule" id="MF_00691"/>
    </source>
</evidence>
<dbReference type="EC" id="3.5.2.9" evidence="1"/>
<dbReference type="EMBL" id="CP001337">
    <property type="protein sequence ID" value="ACL24853.1"/>
    <property type="molecule type" value="Genomic_DNA"/>
</dbReference>
<dbReference type="RefSeq" id="WP_015940712.1">
    <property type="nucleotide sequence ID" value="NC_011831.1"/>
</dbReference>
<dbReference type="SMR" id="B8GBN6"/>
<dbReference type="STRING" id="326427.Cagg_1958"/>
<dbReference type="KEGG" id="cag:Cagg_1958"/>
<dbReference type="eggNOG" id="COG1540">
    <property type="taxonomic scope" value="Bacteria"/>
</dbReference>
<dbReference type="HOGENOM" id="CLU_069535_0_0_0"/>
<dbReference type="OrthoDB" id="9773478at2"/>
<dbReference type="Proteomes" id="UP000002508">
    <property type="component" value="Chromosome"/>
</dbReference>
<dbReference type="GO" id="GO:0017168">
    <property type="term" value="F:5-oxoprolinase (ATP-hydrolyzing) activity"/>
    <property type="evidence" value="ECO:0007669"/>
    <property type="project" value="UniProtKB-UniRule"/>
</dbReference>
<dbReference type="GO" id="GO:0005524">
    <property type="term" value="F:ATP binding"/>
    <property type="evidence" value="ECO:0007669"/>
    <property type="project" value="UniProtKB-UniRule"/>
</dbReference>
<dbReference type="GO" id="GO:0005975">
    <property type="term" value="P:carbohydrate metabolic process"/>
    <property type="evidence" value="ECO:0007669"/>
    <property type="project" value="InterPro"/>
</dbReference>
<dbReference type="CDD" id="cd10787">
    <property type="entry name" value="LamB_YcsF_like"/>
    <property type="match status" value="1"/>
</dbReference>
<dbReference type="Gene3D" id="3.20.20.370">
    <property type="entry name" value="Glycoside hydrolase/deacetylase"/>
    <property type="match status" value="1"/>
</dbReference>
<dbReference type="HAMAP" id="MF_00691">
    <property type="entry name" value="PxpA"/>
    <property type="match status" value="1"/>
</dbReference>
<dbReference type="InterPro" id="IPR011330">
    <property type="entry name" value="Glyco_hydro/deAcase_b/a-brl"/>
</dbReference>
<dbReference type="InterPro" id="IPR005501">
    <property type="entry name" value="LamB/YcsF/PxpA-like"/>
</dbReference>
<dbReference type="NCBIfam" id="NF003814">
    <property type="entry name" value="PRK05406.1-3"/>
    <property type="match status" value="1"/>
</dbReference>
<dbReference type="NCBIfam" id="NF003816">
    <property type="entry name" value="PRK05406.1-5"/>
    <property type="match status" value="1"/>
</dbReference>
<dbReference type="PANTHER" id="PTHR30292:SF0">
    <property type="entry name" value="5-OXOPROLINASE SUBUNIT A"/>
    <property type="match status" value="1"/>
</dbReference>
<dbReference type="PANTHER" id="PTHR30292">
    <property type="entry name" value="UNCHARACTERIZED PROTEIN YBGL-RELATED"/>
    <property type="match status" value="1"/>
</dbReference>
<dbReference type="Pfam" id="PF03746">
    <property type="entry name" value="LamB_YcsF"/>
    <property type="match status" value="1"/>
</dbReference>
<dbReference type="SUPFAM" id="SSF88713">
    <property type="entry name" value="Glycoside hydrolase/deacetylase"/>
    <property type="match status" value="1"/>
</dbReference>
<reference key="1">
    <citation type="submission" date="2008-12" db="EMBL/GenBank/DDBJ databases">
        <title>Complete sequence of Chloroflexus aggregans DSM 9485.</title>
        <authorList>
            <consortium name="US DOE Joint Genome Institute"/>
            <person name="Lucas S."/>
            <person name="Copeland A."/>
            <person name="Lapidus A."/>
            <person name="Glavina del Rio T."/>
            <person name="Dalin E."/>
            <person name="Tice H."/>
            <person name="Pitluck S."/>
            <person name="Foster B."/>
            <person name="Larimer F."/>
            <person name="Land M."/>
            <person name="Hauser L."/>
            <person name="Kyrpides N."/>
            <person name="Mikhailova N."/>
            <person name="Bryant D.A."/>
            <person name="Richardson P."/>
        </authorList>
    </citation>
    <scope>NUCLEOTIDE SEQUENCE [LARGE SCALE GENOMIC DNA]</scope>
    <source>
        <strain>MD-66 / DSM 9485</strain>
    </source>
</reference>
<accession>B8GBN6</accession>
<comment type="function">
    <text evidence="1">Catalyzes the cleavage of 5-oxoproline to form L-glutamate coupled to the hydrolysis of ATP to ADP and inorganic phosphate.</text>
</comment>
<comment type="catalytic activity">
    <reaction evidence="1">
        <text>5-oxo-L-proline + ATP + 2 H2O = L-glutamate + ADP + phosphate + H(+)</text>
        <dbReference type="Rhea" id="RHEA:10348"/>
        <dbReference type="ChEBI" id="CHEBI:15377"/>
        <dbReference type="ChEBI" id="CHEBI:15378"/>
        <dbReference type="ChEBI" id="CHEBI:29985"/>
        <dbReference type="ChEBI" id="CHEBI:30616"/>
        <dbReference type="ChEBI" id="CHEBI:43474"/>
        <dbReference type="ChEBI" id="CHEBI:58402"/>
        <dbReference type="ChEBI" id="CHEBI:456216"/>
        <dbReference type="EC" id="3.5.2.9"/>
    </reaction>
</comment>
<comment type="subunit">
    <text evidence="1">Forms a complex composed of PxpA, PxpB and PxpC.</text>
</comment>
<comment type="similarity">
    <text evidence="1">Belongs to the LamB/PxpA family.</text>
</comment>
<protein>
    <recommendedName>
        <fullName evidence="1">5-oxoprolinase subunit A</fullName>
        <shortName evidence="1">5-OPase subunit A</shortName>
        <ecNumber evidence="1">3.5.2.9</ecNumber>
    </recommendedName>
    <alternativeName>
        <fullName evidence="1">5-oxoprolinase (ATP-hydrolyzing) subunit A</fullName>
    </alternativeName>
</protein>
<organism>
    <name type="scientific">Chloroflexus aggregans (strain MD-66 / DSM 9485)</name>
    <dbReference type="NCBI Taxonomy" id="326427"/>
    <lineage>
        <taxon>Bacteria</taxon>
        <taxon>Bacillati</taxon>
        <taxon>Chloroflexota</taxon>
        <taxon>Chloroflexia</taxon>
        <taxon>Chloroflexales</taxon>
        <taxon>Chloroflexineae</taxon>
        <taxon>Chloroflexaceae</taxon>
        <taxon>Chloroflexus</taxon>
    </lineage>
</organism>
<gene>
    <name evidence="1" type="primary">pxpA</name>
    <name type="ordered locus">Cagg_1958</name>
</gene>
<keyword id="KW-0067">ATP-binding</keyword>
<keyword id="KW-0378">Hydrolase</keyword>
<keyword id="KW-0547">Nucleotide-binding</keyword>